<proteinExistence type="inferred from homology"/>
<organismHost>
    <name type="scientific">Homo sapiens</name>
    <name type="common">Human</name>
    <dbReference type="NCBI Taxonomy" id="9606"/>
</organismHost>
<feature type="chain" id="PRO_0000408410" description="Phosphoprotein 85">
    <location>
        <begin position="1"/>
        <end position="610"/>
    </location>
</feature>
<feature type="region of interest" description="Disordered" evidence="2">
    <location>
        <begin position="462"/>
        <end position="530"/>
    </location>
</feature>
<feature type="region of interest" description="Disordered" evidence="2">
    <location>
        <begin position="543"/>
        <end position="610"/>
    </location>
</feature>
<feature type="compositionally biased region" description="Low complexity" evidence="2">
    <location>
        <begin position="467"/>
        <end position="478"/>
    </location>
</feature>
<feature type="compositionally biased region" description="Polar residues" evidence="2">
    <location>
        <begin position="484"/>
        <end position="495"/>
    </location>
</feature>
<feature type="compositionally biased region" description="Low complexity" evidence="2">
    <location>
        <begin position="503"/>
        <end position="515"/>
    </location>
</feature>
<feature type="compositionally biased region" description="Low complexity" evidence="2">
    <location>
        <begin position="552"/>
        <end position="567"/>
    </location>
</feature>
<feature type="compositionally biased region" description="Polar residues" evidence="2">
    <location>
        <begin position="581"/>
        <end position="592"/>
    </location>
</feature>
<feature type="compositionally biased region" description="Basic and acidic residues" evidence="2">
    <location>
        <begin position="600"/>
        <end position="610"/>
    </location>
</feature>
<comment type="subcellular location">
    <subcellularLocation>
        <location evidence="1">Virion tegument</location>
    </subcellularLocation>
    <subcellularLocation>
        <location>Host cytoplasm</location>
    </subcellularLocation>
    <text evidence="1">Expressed exclusively at the cytoplasmic level during the late phase of the virus replication cycle. Also found in dense bodies (By similarity).</text>
</comment>
<comment type="PTM">
    <text evidence="3">Phosphorylated.</text>
</comment>
<comment type="similarity">
    <text evidence="3">Belongs to the herpesviridae pp85 family.</text>
</comment>
<protein>
    <recommendedName>
        <fullName>Phosphoprotein 85</fullName>
        <shortName>pp85</shortName>
    </recommendedName>
    <alternativeName>
        <fullName>Protein U14</fullName>
    </alternativeName>
</protein>
<dbReference type="EMBL" id="AF157706">
    <property type="protein sequence ID" value="AAD49629.1"/>
    <property type="molecule type" value="Genomic_DNA"/>
</dbReference>
<dbReference type="RefSeq" id="NP_050195.1">
    <property type="nucleotide sequence ID" value="NC_000898.1"/>
</dbReference>
<dbReference type="SMR" id="Q9QJ49"/>
<dbReference type="BioGRID" id="1678239">
    <property type="interactions" value="2"/>
</dbReference>
<dbReference type="GeneID" id="1497013"/>
<dbReference type="KEGG" id="vg:1497013"/>
<dbReference type="Proteomes" id="UP000006930">
    <property type="component" value="Segment"/>
</dbReference>
<dbReference type="GO" id="GO:0030430">
    <property type="term" value="C:host cell cytoplasm"/>
    <property type="evidence" value="ECO:0007669"/>
    <property type="project" value="UniProtKB-SubCell"/>
</dbReference>
<dbReference type="GO" id="GO:0019033">
    <property type="term" value="C:viral tegument"/>
    <property type="evidence" value="ECO:0007669"/>
    <property type="project" value="UniProtKB-SubCell"/>
</dbReference>
<dbReference type="InterPro" id="IPR006731">
    <property type="entry name" value="Herpes_pp85"/>
</dbReference>
<dbReference type="Pfam" id="PF04637">
    <property type="entry name" value="Herpes_pp85"/>
    <property type="match status" value="1"/>
</dbReference>
<gene>
    <name type="primary">U14</name>
</gene>
<accession>Q9QJ49</accession>
<organism>
    <name type="scientific">Human herpesvirus 6B (strain Z29)</name>
    <name type="common">HHV-6 variant B</name>
    <name type="synonym">Human B lymphotropic virus</name>
    <dbReference type="NCBI Taxonomy" id="36351"/>
    <lineage>
        <taxon>Viruses</taxon>
        <taxon>Duplodnaviria</taxon>
        <taxon>Heunggongvirae</taxon>
        <taxon>Peploviricota</taxon>
        <taxon>Herviviricetes</taxon>
        <taxon>Herpesvirales</taxon>
        <taxon>Orthoherpesviridae</taxon>
        <taxon>Betaherpesvirinae</taxon>
        <taxon>Roseolovirus</taxon>
        <taxon>Roseolovirus humanbeta6b</taxon>
        <taxon>Human herpesvirus 6B</taxon>
    </lineage>
</organism>
<sequence>MITHAMEGSKTFNIPTFVLDENCNFIPDVLSRANAKFIKEVLIRDSYNAVCLANSFIPMATQTVEQILIIITKFKFSRSRDLLMSVFRLGVHINRFYAGKNQVKHMITMMKSLFDTEEAMRQLDRALMGLFVDARDNSYMPLIALSLHENGLPDSKFIKAVRLIQTTVNSFHNRPDADIEQYAEKLRAYNYLYKIPKYSLKEAVDIYSDNLKDLTIGVNKKPTLLFTSSDDAYLSHIYNDLLFLTSTWNMIYNCKKEIRRLNTWIKYEINSIMETAVLVGFQLPDLKETILDLAALISNMNLVSPDKELFPHYKLILAKLFEICIFATKANICILPSFIKGHLIEFEDVLKRSNDDEDLNYLLLKSRDSDDEYDEDKPPIQVDPGRVDNVLTDSDFFNVTPENAFSSIAIMPISYDKTIDVEDNEIQVLEVEMQSLSAVVYGAVASKYGLSLEQVIRKLNRNEGRTSSRASPSHSTSTVPYSPPQSDRSTPTSILRQRVPMRSNSRSSSVSFSQEDSNRSHYSDETNISDYSYPMADLELEDEEPMEDHPHSPQSTSSNNSMSRQSRALQNGQRRRAPTMVPSSQTRRQNNARPRRVARRLTEMMNDARL</sequence>
<evidence type="ECO:0000250" key="1"/>
<evidence type="ECO:0000256" key="2">
    <source>
        <dbReference type="SAM" id="MobiDB-lite"/>
    </source>
</evidence>
<evidence type="ECO:0000305" key="3"/>
<name>PP85_HHV6Z</name>
<keyword id="KW-1035">Host cytoplasm</keyword>
<keyword id="KW-0597">Phosphoprotein</keyword>
<keyword id="KW-1185">Reference proteome</keyword>
<keyword id="KW-0946">Virion</keyword>
<keyword id="KW-0920">Virion tegument</keyword>
<reference key="1">
    <citation type="journal article" date="1999" name="J. Virol.">
        <title>Human herpesvirus 6B genome sequence: coding content and comparison with human herpesvirus 6A.</title>
        <authorList>
            <person name="Dominguez G."/>
            <person name="Dambaugh T.R."/>
            <person name="Stamey F.R."/>
            <person name="Dewhurst S."/>
            <person name="Inoue N."/>
            <person name="Pellett P.E."/>
        </authorList>
    </citation>
    <scope>NUCLEOTIDE SEQUENCE [LARGE SCALE GENOMIC DNA]</scope>
</reference>